<comment type="function">
    <text evidence="7 9">Involved in pre-60S ribosomal particles maturation by promoting the nuclear export of the 60S ribosome (PubMed:32669547). Negatively modulates the DNA binding activity of Oct-2 and therefore its transcriptional regulatory activity (PubMed:9115366).</text>
</comment>
<comment type="subunit">
    <text evidence="6">Associates with pre-60S ribosomal particles.</text>
</comment>
<comment type="interaction">
    <interactant intactId="EBI-726769">
        <id>O00488</id>
    </interactant>
    <interactant intactId="EBI-742054">
        <id>Q96D03</id>
        <label>DDIT4L</label>
    </interactant>
    <organismsDiffer>false</organismsDiffer>
    <experiments>3</experiments>
</comment>
<comment type="interaction">
    <interactant intactId="EBI-726769">
        <id>O00488</id>
    </interactant>
    <interactant intactId="EBI-739832">
        <id>Q8TBB1</id>
        <label>LNX1</label>
    </interactant>
    <organismsDiffer>false</organismsDiffer>
    <experiments>3</experiments>
</comment>
<comment type="interaction">
    <interactant intactId="EBI-726769">
        <id>O00488</id>
    </interactant>
    <interactant intactId="EBI-79165">
        <id>Q9NRD5</id>
        <label>PICK1</label>
    </interactant>
    <organismsDiffer>false</organismsDiffer>
    <experiments>3</experiments>
</comment>
<comment type="subcellular location">
    <subcellularLocation>
        <location evidence="4">Nucleus</location>
        <location evidence="4">Nucleolus</location>
    </subcellularLocation>
    <subcellularLocation>
        <location evidence="1">Cytoplasm</location>
    </subcellularLocation>
    <text evidence="1">Shuttles between the nucleus and the cytoplasm.</text>
</comment>
<comment type="tissue specificity">
    <text evidence="7">Ubiquitous. Detected in spleen, prostate, testis, small intestine, colon and to a minor level in thymus and peripheral blood leukocytes.</text>
</comment>
<comment type="domain">
    <text evidence="5">The protein is largely disordered, with the exception of the zinc finger domain.</text>
</comment>
<comment type="similarity">
    <text evidence="8">Belongs to the ZNF593/BUD20 C2H2-type zinc-finger protein family.</text>
</comment>
<comment type="sequence caution" evidence="8">
    <conflict type="erroneous initiation">
        <sequence resource="EMBL-CDS" id="AAH02580"/>
    </conflict>
</comment>
<comment type="sequence caution" evidence="8">
    <conflict type="erroneous initiation">
        <sequence resource="EMBL-CDS" id="AAH19267"/>
    </conflict>
</comment>
<comment type="sequence caution" evidence="8">
    <conflict type="erroneous initiation">
        <sequence resource="EMBL-CDS" id="BAA20369"/>
    </conflict>
</comment>
<comment type="sequence caution" evidence="8">
    <conflict type="erroneous initiation">
        <sequence resource="EMBL-CDS" id="BAG34867"/>
    </conflict>
</comment>
<organism>
    <name type="scientific">Homo sapiens</name>
    <name type="common">Human</name>
    <dbReference type="NCBI Taxonomy" id="9606"/>
    <lineage>
        <taxon>Eukaryota</taxon>
        <taxon>Metazoa</taxon>
        <taxon>Chordata</taxon>
        <taxon>Craniata</taxon>
        <taxon>Vertebrata</taxon>
        <taxon>Euteleostomi</taxon>
        <taxon>Mammalia</taxon>
        <taxon>Eutheria</taxon>
        <taxon>Euarchontoglires</taxon>
        <taxon>Primates</taxon>
        <taxon>Haplorrhini</taxon>
        <taxon>Catarrhini</taxon>
        <taxon>Hominidae</taxon>
        <taxon>Homo</taxon>
    </lineage>
</organism>
<keyword id="KW-0002">3D-structure</keyword>
<keyword id="KW-0963">Cytoplasm</keyword>
<keyword id="KW-0238">DNA-binding</keyword>
<keyword id="KW-0479">Metal-binding</keyword>
<keyword id="KW-0539">Nucleus</keyword>
<keyword id="KW-1267">Proteomics identification</keyword>
<keyword id="KW-1185">Reference proteome</keyword>
<keyword id="KW-0690">Ribosome biogenesis</keyword>
<keyword id="KW-0804">Transcription</keyword>
<keyword id="KW-0805">Transcription regulation</keyword>
<keyword id="KW-0862">Zinc</keyword>
<keyword id="KW-0863">Zinc-finger</keyword>
<proteinExistence type="evidence at protein level"/>
<gene>
    <name type="primary">ZNF593</name>
    <name type="synonym">ZT86</name>
</gene>
<accession>O00488</accession>
<accession>B2R4S0</accession>
<accession>Q5T2H7</accession>
<dbReference type="EMBL" id="AK311926">
    <property type="protein sequence ID" value="BAG34867.1"/>
    <property type="status" value="ALT_INIT"/>
    <property type="molecule type" value="mRNA"/>
</dbReference>
<dbReference type="EMBL" id="AL391650">
    <property type="status" value="NOT_ANNOTATED_CDS"/>
    <property type="molecule type" value="Genomic_DNA"/>
</dbReference>
<dbReference type="EMBL" id="CH471059">
    <property type="protein sequence ID" value="EAX07843.1"/>
    <property type="molecule type" value="Genomic_DNA"/>
</dbReference>
<dbReference type="EMBL" id="BC002580">
    <property type="protein sequence ID" value="AAH02580.1"/>
    <property type="status" value="ALT_INIT"/>
    <property type="molecule type" value="mRNA"/>
</dbReference>
<dbReference type="EMBL" id="BC019267">
    <property type="protein sequence ID" value="AAH19267.1"/>
    <property type="status" value="ALT_INIT"/>
    <property type="molecule type" value="mRNA"/>
</dbReference>
<dbReference type="EMBL" id="D45213">
    <property type="protein sequence ID" value="BAA20369.1"/>
    <property type="status" value="ALT_INIT"/>
    <property type="molecule type" value="mRNA"/>
</dbReference>
<dbReference type="CCDS" id="CCDS275.2"/>
<dbReference type="RefSeq" id="NP_056955.2">
    <property type="nucleotide sequence ID" value="NM_015871.5"/>
</dbReference>
<dbReference type="PDB" id="1ZR9">
    <property type="method" value="NMR"/>
    <property type="chains" value="A=20-134"/>
</dbReference>
<dbReference type="PDB" id="6LSS">
    <property type="method" value="EM"/>
    <property type="resolution" value="3.23 A"/>
    <property type="chains" value="9=1-134"/>
</dbReference>
<dbReference type="PDB" id="6LU8">
    <property type="method" value="EM"/>
    <property type="resolution" value="3.13 A"/>
    <property type="chains" value="9=1-134"/>
</dbReference>
<dbReference type="PDB" id="8FL2">
    <property type="method" value="EM"/>
    <property type="resolution" value="2.67 A"/>
    <property type="chains" value="NP=1-134"/>
</dbReference>
<dbReference type="PDB" id="8FL3">
    <property type="method" value="EM"/>
    <property type="resolution" value="2.53 A"/>
    <property type="chains" value="NP=1-134"/>
</dbReference>
<dbReference type="PDB" id="8FL4">
    <property type="method" value="EM"/>
    <property type="resolution" value="2.89 A"/>
    <property type="chains" value="NP=1-134"/>
</dbReference>
<dbReference type="PDB" id="8FL6">
    <property type="method" value="EM"/>
    <property type="resolution" value="2.62 A"/>
    <property type="chains" value="NP=1-134"/>
</dbReference>
<dbReference type="PDB" id="8FL7">
    <property type="method" value="EM"/>
    <property type="resolution" value="2.55 A"/>
    <property type="chains" value="NP=1-134"/>
</dbReference>
<dbReference type="PDB" id="8FL9">
    <property type="method" value="EM"/>
    <property type="resolution" value="2.75 A"/>
    <property type="chains" value="NP=1-134"/>
</dbReference>
<dbReference type="PDB" id="8FLA">
    <property type="method" value="EM"/>
    <property type="resolution" value="2.63 A"/>
    <property type="chains" value="NP=1-134"/>
</dbReference>
<dbReference type="PDB" id="8FLB">
    <property type="method" value="EM"/>
    <property type="resolution" value="2.55 A"/>
    <property type="chains" value="NP=1-134"/>
</dbReference>
<dbReference type="PDB" id="8FLC">
    <property type="method" value="EM"/>
    <property type="resolution" value="2.76 A"/>
    <property type="chains" value="NP=1-134"/>
</dbReference>
<dbReference type="PDB" id="8FLD">
    <property type="method" value="EM"/>
    <property type="resolution" value="2.58 A"/>
    <property type="chains" value="NP=1-134"/>
</dbReference>
<dbReference type="PDB" id="8FLE">
    <property type="method" value="EM"/>
    <property type="resolution" value="2.48 A"/>
    <property type="chains" value="NP=1-134"/>
</dbReference>
<dbReference type="PDB" id="8FLF">
    <property type="method" value="EM"/>
    <property type="resolution" value="2.65 A"/>
    <property type="chains" value="NP=1-134"/>
</dbReference>
<dbReference type="PDB" id="8IDT">
    <property type="method" value="EM"/>
    <property type="resolution" value="2.80 A"/>
    <property type="chains" value="9=1-134"/>
</dbReference>
<dbReference type="PDB" id="8IDY">
    <property type="method" value="EM"/>
    <property type="resolution" value="3.00 A"/>
    <property type="chains" value="9=1-134"/>
</dbReference>
<dbReference type="PDB" id="8IE3">
    <property type="method" value="EM"/>
    <property type="resolution" value="3.30 A"/>
    <property type="chains" value="9=1-134"/>
</dbReference>
<dbReference type="PDB" id="8INE">
    <property type="method" value="EM"/>
    <property type="resolution" value="3.20 A"/>
    <property type="chains" value="9=1-134"/>
</dbReference>
<dbReference type="PDB" id="8INF">
    <property type="method" value="EM"/>
    <property type="resolution" value="3.00 A"/>
    <property type="chains" value="9=1-134"/>
</dbReference>
<dbReference type="PDB" id="8INK">
    <property type="method" value="EM"/>
    <property type="resolution" value="3.20 A"/>
    <property type="chains" value="9=1-134"/>
</dbReference>
<dbReference type="PDB" id="8IPD">
    <property type="method" value="EM"/>
    <property type="resolution" value="3.20 A"/>
    <property type="chains" value="9=1-134"/>
</dbReference>
<dbReference type="PDB" id="8IPX">
    <property type="method" value="EM"/>
    <property type="resolution" value="4.30 A"/>
    <property type="chains" value="9=1-134"/>
</dbReference>
<dbReference type="PDB" id="8IPY">
    <property type="method" value="EM"/>
    <property type="resolution" value="3.20 A"/>
    <property type="chains" value="9=1-134"/>
</dbReference>
<dbReference type="PDB" id="8IR3">
    <property type="method" value="EM"/>
    <property type="resolution" value="3.50 A"/>
    <property type="chains" value="9=1-134"/>
</dbReference>
<dbReference type="PDB" id="8RL2">
    <property type="method" value="EM"/>
    <property type="resolution" value="2.84 A"/>
    <property type="chains" value="CL=1-134"/>
</dbReference>
<dbReference type="PDBsum" id="1ZR9"/>
<dbReference type="PDBsum" id="6LSS"/>
<dbReference type="PDBsum" id="6LU8"/>
<dbReference type="PDBsum" id="8FL2"/>
<dbReference type="PDBsum" id="8FL3"/>
<dbReference type="PDBsum" id="8FL4"/>
<dbReference type="PDBsum" id="8FL6"/>
<dbReference type="PDBsum" id="8FL7"/>
<dbReference type="PDBsum" id="8FL9"/>
<dbReference type="PDBsum" id="8FLA"/>
<dbReference type="PDBsum" id="8FLB"/>
<dbReference type="PDBsum" id="8FLC"/>
<dbReference type="PDBsum" id="8FLD"/>
<dbReference type="PDBsum" id="8FLE"/>
<dbReference type="PDBsum" id="8FLF"/>
<dbReference type="PDBsum" id="8IDT"/>
<dbReference type="PDBsum" id="8IDY"/>
<dbReference type="PDBsum" id="8IE3"/>
<dbReference type="PDBsum" id="8INE"/>
<dbReference type="PDBsum" id="8INF"/>
<dbReference type="PDBsum" id="8INK"/>
<dbReference type="PDBsum" id="8IPD"/>
<dbReference type="PDBsum" id="8IPX"/>
<dbReference type="PDBsum" id="8IPY"/>
<dbReference type="PDBsum" id="8IR3"/>
<dbReference type="PDBsum" id="8RL2"/>
<dbReference type="EMDB" id="EMD-0964"/>
<dbReference type="EMDB" id="EMD-0978"/>
<dbReference type="EMDB" id="EMD-19330"/>
<dbReference type="EMDB" id="EMD-29265"/>
<dbReference type="EMDB" id="EMD-29266"/>
<dbReference type="EMDB" id="EMD-29267"/>
<dbReference type="EMDB" id="EMD-29268"/>
<dbReference type="EMDB" id="EMD-29269"/>
<dbReference type="EMDB" id="EMD-29271"/>
<dbReference type="EMDB" id="EMD-29272"/>
<dbReference type="EMDB" id="EMD-29273"/>
<dbReference type="EMDB" id="EMD-29274"/>
<dbReference type="EMDB" id="EMD-29275"/>
<dbReference type="EMDB" id="EMD-29276"/>
<dbReference type="EMDB" id="EMD-29277"/>
<dbReference type="EMDB" id="EMD-35370"/>
<dbReference type="EMDB" id="EMD-35371"/>
<dbReference type="EMDB" id="EMD-35375"/>
<dbReference type="EMDB" id="EMD-35596"/>
<dbReference type="EMDB" id="EMD-35597"/>
<dbReference type="EMDB" id="EMD-35599"/>
<dbReference type="EMDB" id="EMD-35639"/>
<dbReference type="EMDB" id="EMD-35649"/>
<dbReference type="EMDB" id="EMD-35651"/>
<dbReference type="EMDB" id="EMD-35673"/>
<dbReference type="SMR" id="O00488"/>
<dbReference type="BioGRID" id="119241">
    <property type="interactions" value="64"/>
</dbReference>
<dbReference type="FunCoup" id="O00488">
    <property type="interactions" value="1264"/>
</dbReference>
<dbReference type="IntAct" id="O00488">
    <property type="interactions" value="29"/>
</dbReference>
<dbReference type="MINT" id="O00488"/>
<dbReference type="STRING" id="9606.ENSP00000363384"/>
<dbReference type="GlyGen" id="O00488">
    <property type="glycosylation" value="1 site, 1 O-linked glycan (1 site)"/>
</dbReference>
<dbReference type="iPTMnet" id="O00488"/>
<dbReference type="PhosphoSitePlus" id="O00488"/>
<dbReference type="BioMuta" id="ZNF593"/>
<dbReference type="jPOST" id="O00488"/>
<dbReference type="MassIVE" id="O00488"/>
<dbReference type="PaxDb" id="9606-ENSP00000363384"/>
<dbReference type="PeptideAtlas" id="O00488"/>
<dbReference type="ProteomicsDB" id="47933"/>
<dbReference type="Pumba" id="O00488"/>
<dbReference type="Antibodypedia" id="30564">
    <property type="antibodies" value="72 antibodies from 18 providers"/>
</dbReference>
<dbReference type="DNASU" id="51042"/>
<dbReference type="Ensembl" id="ENST00000374266.7">
    <property type="protein sequence ID" value="ENSP00000363384.5"/>
    <property type="gene ID" value="ENSG00000142684.9"/>
</dbReference>
<dbReference type="GeneID" id="51042"/>
<dbReference type="KEGG" id="hsa:51042"/>
<dbReference type="MANE-Select" id="ENST00000374266.7">
    <property type="protein sequence ID" value="ENSP00000363384.5"/>
    <property type="RefSeq nucleotide sequence ID" value="NM_015871.5"/>
    <property type="RefSeq protein sequence ID" value="NP_056955.2"/>
</dbReference>
<dbReference type="UCSC" id="uc001bll.5">
    <property type="organism name" value="human"/>
</dbReference>
<dbReference type="AGR" id="HGNC:30943"/>
<dbReference type="CTD" id="51042"/>
<dbReference type="GeneCards" id="ZNF593"/>
<dbReference type="HGNC" id="HGNC:30943">
    <property type="gene designation" value="ZNF593"/>
</dbReference>
<dbReference type="HPA" id="ENSG00000142684">
    <property type="expression patterns" value="Low tissue specificity"/>
</dbReference>
<dbReference type="MIM" id="616698">
    <property type="type" value="gene"/>
</dbReference>
<dbReference type="neXtProt" id="NX_O00488"/>
<dbReference type="OpenTargets" id="ENSG00000142684"/>
<dbReference type="PharmGKB" id="PA134962156"/>
<dbReference type="VEuPathDB" id="HostDB:ENSG00000142684"/>
<dbReference type="eggNOG" id="KOG3408">
    <property type="taxonomic scope" value="Eukaryota"/>
</dbReference>
<dbReference type="GeneTree" id="ENSGT00390000004173"/>
<dbReference type="HOGENOM" id="CLU_117291_1_2_1"/>
<dbReference type="InParanoid" id="O00488"/>
<dbReference type="OMA" id="MKDHFRS"/>
<dbReference type="OrthoDB" id="24683at2759"/>
<dbReference type="PAN-GO" id="O00488">
    <property type="GO annotations" value="0 GO annotations based on evolutionary models"/>
</dbReference>
<dbReference type="PhylomeDB" id="O00488"/>
<dbReference type="TreeFam" id="TF315114"/>
<dbReference type="PathwayCommons" id="O00488"/>
<dbReference type="SignaLink" id="O00488"/>
<dbReference type="BioGRID-ORCS" id="51042">
    <property type="hits" value="187 hits in 1177 CRISPR screens"/>
</dbReference>
<dbReference type="ChiTaRS" id="ZNF593">
    <property type="organism name" value="human"/>
</dbReference>
<dbReference type="EvolutionaryTrace" id="O00488"/>
<dbReference type="GeneWiki" id="ZNF593"/>
<dbReference type="GenomeRNAi" id="51042"/>
<dbReference type="Pharos" id="O00488">
    <property type="development level" value="Tbio"/>
</dbReference>
<dbReference type="PRO" id="PR:O00488"/>
<dbReference type="Proteomes" id="UP000005640">
    <property type="component" value="Chromosome 1"/>
</dbReference>
<dbReference type="RNAct" id="O00488">
    <property type="molecule type" value="protein"/>
</dbReference>
<dbReference type="Bgee" id="ENSG00000142684">
    <property type="expression patterns" value="Expressed in gastrocnemius and 175 other cell types or tissues"/>
</dbReference>
<dbReference type="ExpressionAtlas" id="O00488">
    <property type="expression patterns" value="baseline and differential"/>
</dbReference>
<dbReference type="GO" id="GO:0005737">
    <property type="term" value="C:cytoplasm"/>
    <property type="evidence" value="ECO:0007669"/>
    <property type="project" value="UniProtKB-SubCell"/>
</dbReference>
<dbReference type="GO" id="GO:0005730">
    <property type="term" value="C:nucleolus"/>
    <property type="evidence" value="ECO:0000314"/>
    <property type="project" value="HPA"/>
</dbReference>
<dbReference type="GO" id="GO:0005654">
    <property type="term" value="C:nucleoplasm"/>
    <property type="evidence" value="ECO:0000314"/>
    <property type="project" value="HPA"/>
</dbReference>
<dbReference type="GO" id="GO:0003677">
    <property type="term" value="F:DNA binding"/>
    <property type="evidence" value="ECO:0007669"/>
    <property type="project" value="UniProtKB-KW"/>
</dbReference>
<dbReference type="GO" id="GO:1990275">
    <property type="term" value="F:preribosome binding"/>
    <property type="evidence" value="ECO:0000314"/>
    <property type="project" value="UniProtKB"/>
</dbReference>
<dbReference type="GO" id="GO:0008270">
    <property type="term" value="F:zinc ion binding"/>
    <property type="evidence" value="ECO:0000315"/>
    <property type="project" value="CAFA"/>
</dbReference>
<dbReference type="GO" id="GO:1903026">
    <property type="term" value="P:negative regulation of RNA polymerase II regulatory region sequence-specific DNA binding"/>
    <property type="evidence" value="ECO:0000316"/>
    <property type="project" value="GO_Central"/>
</dbReference>
<dbReference type="GO" id="GO:0045944">
    <property type="term" value="P:positive regulation of transcription by RNA polymerase II"/>
    <property type="evidence" value="ECO:0000316"/>
    <property type="project" value="GO_Central"/>
</dbReference>
<dbReference type="GO" id="GO:0042254">
    <property type="term" value="P:ribosome biogenesis"/>
    <property type="evidence" value="ECO:0007669"/>
    <property type="project" value="UniProtKB-KW"/>
</dbReference>
<dbReference type="DisProt" id="DP00549"/>
<dbReference type="FunFam" id="3.30.160.60:FF:000299">
    <property type="entry name" value="Zinc finger protein 593"/>
    <property type="match status" value="1"/>
</dbReference>
<dbReference type="Gene3D" id="3.30.160.60">
    <property type="entry name" value="Classic Zinc Finger"/>
    <property type="match status" value="1"/>
</dbReference>
<dbReference type="InterPro" id="IPR051879">
    <property type="entry name" value="C2H2-ZF_Maturation_Protein"/>
</dbReference>
<dbReference type="InterPro" id="IPR003604">
    <property type="entry name" value="Matrin/U1-like-C_Znf_C2H2"/>
</dbReference>
<dbReference type="InterPro" id="IPR022755">
    <property type="entry name" value="Znf_C2H2_jaz"/>
</dbReference>
<dbReference type="InterPro" id="IPR036236">
    <property type="entry name" value="Znf_C2H2_sf"/>
</dbReference>
<dbReference type="InterPro" id="IPR013087">
    <property type="entry name" value="Znf_C2H2_type"/>
</dbReference>
<dbReference type="PANTHER" id="PTHR46095">
    <property type="entry name" value="ZINC FINGER PROTEIN 593"/>
    <property type="match status" value="1"/>
</dbReference>
<dbReference type="PANTHER" id="PTHR46095:SF1">
    <property type="entry name" value="ZINC FINGER PROTEIN 593"/>
    <property type="match status" value="1"/>
</dbReference>
<dbReference type="Pfam" id="PF12171">
    <property type="entry name" value="zf-C2H2_jaz"/>
    <property type="match status" value="1"/>
</dbReference>
<dbReference type="SMART" id="SM00451">
    <property type="entry name" value="ZnF_U1"/>
    <property type="match status" value="1"/>
</dbReference>
<dbReference type="SUPFAM" id="SSF57667">
    <property type="entry name" value="beta-beta-alpha zinc fingers"/>
    <property type="match status" value="1"/>
</dbReference>
<dbReference type="PROSITE" id="PS00028">
    <property type="entry name" value="ZINC_FINGER_C2H2_1"/>
    <property type="match status" value="1"/>
</dbReference>
<dbReference type="PROSITE" id="PS50157">
    <property type="entry name" value="ZINC_FINGER_C2H2_2"/>
    <property type="match status" value="1"/>
</dbReference>
<evidence type="ECO:0000250" key="1">
    <source>
        <dbReference type="UniProtKB" id="Q08004"/>
    </source>
</evidence>
<evidence type="ECO:0000255" key="2">
    <source>
        <dbReference type="PROSITE-ProRule" id="PRU00042"/>
    </source>
</evidence>
<evidence type="ECO:0000256" key="3">
    <source>
        <dbReference type="SAM" id="MobiDB-lite"/>
    </source>
</evidence>
<evidence type="ECO:0000269" key="4">
    <source>
    </source>
</evidence>
<evidence type="ECO:0000269" key="5">
    <source>
    </source>
</evidence>
<evidence type="ECO:0000269" key="6">
    <source>
    </source>
</evidence>
<evidence type="ECO:0000269" key="7">
    <source>
    </source>
</evidence>
<evidence type="ECO:0000305" key="8"/>
<evidence type="ECO:0000305" key="9">
    <source>
    </source>
</evidence>
<evidence type="ECO:0007744" key="10">
    <source>
        <dbReference type="PDB" id="6LSS"/>
    </source>
</evidence>
<evidence type="ECO:0007744" key="11">
    <source>
        <dbReference type="PDB" id="6LU8"/>
    </source>
</evidence>
<evidence type="ECO:0007829" key="12">
    <source>
        <dbReference type="PDB" id="1ZR9"/>
    </source>
</evidence>
<protein>
    <recommendedName>
        <fullName>Zinc finger protein 593</fullName>
    </recommendedName>
    <alternativeName>
        <fullName>Zinc finger protein T86</fullName>
    </alternativeName>
</protein>
<feature type="chain" id="PRO_0000047684" description="Zinc finger protein 593">
    <location>
        <begin position="1"/>
        <end position="134"/>
    </location>
</feature>
<feature type="zinc finger region" description="C2H2-type" evidence="2">
    <location>
        <begin position="61"/>
        <end position="85"/>
    </location>
</feature>
<feature type="region of interest" description="Disordered" evidence="3">
    <location>
        <begin position="1"/>
        <end position="57"/>
    </location>
</feature>
<feature type="region of interest" description="Disordered" evidence="3">
    <location>
        <begin position="82"/>
        <end position="134"/>
    </location>
</feature>
<feature type="compositionally biased region" description="Basic residues" evidence="3">
    <location>
        <begin position="1"/>
        <end position="25"/>
    </location>
</feature>
<feature type="compositionally biased region" description="Basic and acidic residues" evidence="3">
    <location>
        <begin position="26"/>
        <end position="36"/>
    </location>
</feature>
<feature type="sequence variant" id="VAR_059924" description="In dbSNP:rs2232649.">
    <original>R</original>
    <variation>Q</variation>
    <location>
        <position position="6"/>
    </location>
</feature>
<feature type="strand" evidence="12">
    <location>
        <begin position="53"/>
        <end position="55"/>
    </location>
</feature>
<feature type="helix" evidence="12">
    <location>
        <begin position="56"/>
        <end position="59"/>
    </location>
</feature>
<feature type="turn" evidence="12">
    <location>
        <begin position="64"/>
        <end position="66"/>
    </location>
</feature>
<feature type="helix" evidence="12">
    <location>
        <begin position="73"/>
        <end position="79"/>
    </location>
</feature>
<feature type="helix" evidence="12">
    <location>
        <begin position="83"/>
        <end position="92"/>
    </location>
</feature>
<feature type="turn" evidence="12">
    <location>
        <begin position="99"/>
        <end position="101"/>
    </location>
</feature>
<name>ZN593_HUMAN</name>
<reference key="1">
    <citation type="journal article" date="2004" name="Nat. Genet.">
        <title>Complete sequencing and characterization of 21,243 full-length human cDNAs.</title>
        <authorList>
            <person name="Ota T."/>
            <person name="Suzuki Y."/>
            <person name="Nishikawa T."/>
            <person name="Otsuki T."/>
            <person name="Sugiyama T."/>
            <person name="Irie R."/>
            <person name="Wakamatsu A."/>
            <person name="Hayashi K."/>
            <person name="Sato H."/>
            <person name="Nagai K."/>
            <person name="Kimura K."/>
            <person name="Makita H."/>
            <person name="Sekine M."/>
            <person name="Obayashi M."/>
            <person name="Nishi T."/>
            <person name="Shibahara T."/>
            <person name="Tanaka T."/>
            <person name="Ishii S."/>
            <person name="Yamamoto J."/>
            <person name="Saito K."/>
            <person name="Kawai Y."/>
            <person name="Isono Y."/>
            <person name="Nakamura Y."/>
            <person name="Nagahari K."/>
            <person name="Murakami K."/>
            <person name="Yasuda T."/>
            <person name="Iwayanagi T."/>
            <person name="Wagatsuma M."/>
            <person name="Shiratori A."/>
            <person name="Sudo H."/>
            <person name="Hosoiri T."/>
            <person name="Kaku Y."/>
            <person name="Kodaira H."/>
            <person name="Kondo H."/>
            <person name="Sugawara M."/>
            <person name="Takahashi M."/>
            <person name="Kanda K."/>
            <person name="Yokoi T."/>
            <person name="Furuya T."/>
            <person name="Kikkawa E."/>
            <person name="Omura Y."/>
            <person name="Abe K."/>
            <person name="Kamihara K."/>
            <person name="Katsuta N."/>
            <person name="Sato K."/>
            <person name="Tanikawa M."/>
            <person name="Yamazaki M."/>
            <person name="Ninomiya K."/>
            <person name="Ishibashi T."/>
            <person name="Yamashita H."/>
            <person name="Murakawa K."/>
            <person name="Fujimori K."/>
            <person name="Tanai H."/>
            <person name="Kimata M."/>
            <person name="Watanabe M."/>
            <person name="Hiraoka S."/>
            <person name="Chiba Y."/>
            <person name="Ishida S."/>
            <person name="Ono Y."/>
            <person name="Takiguchi S."/>
            <person name="Watanabe S."/>
            <person name="Yosida M."/>
            <person name="Hotuta T."/>
            <person name="Kusano J."/>
            <person name="Kanehori K."/>
            <person name="Takahashi-Fujii A."/>
            <person name="Hara H."/>
            <person name="Tanase T.-O."/>
            <person name="Nomura Y."/>
            <person name="Togiya S."/>
            <person name="Komai F."/>
            <person name="Hara R."/>
            <person name="Takeuchi K."/>
            <person name="Arita M."/>
            <person name="Imose N."/>
            <person name="Musashino K."/>
            <person name="Yuuki H."/>
            <person name="Oshima A."/>
            <person name="Sasaki N."/>
            <person name="Aotsuka S."/>
            <person name="Yoshikawa Y."/>
            <person name="Matsunawa H."/>
            <person name="Ichihara T."/>
            <person name="Shiohata N."/>
            <person name="Sano S."/>
            <person name="Moriya S."/>
            <person name="Momiyama H."/>
            <person name="Satoh N."/>
            <person name="Takami S."/>
            <person name="Terashima Y."/>
            <person name="Suzuki O."/>
            <person name="Nakagawa S."/>
            <person name="Senoh A."/>
            <person name="Mizoguchi H."/>
            <person name="Goto Y."/>
            <person name="Shimizu F."/>
            <person name="Wakebe H."/>
            <person name="Hishigaki H."/>
            <person name="Watanabe T."/>
            <person name="Sugiyama A."/>
            <person name="Takemoto M."/>
            <person name="Kawakami B."/>
            <person name="Yamazaki M."/>
            <person name="Watanabe K."/>
            <person name="Kumagai A."/>
            <person name="Itakura S."/>
            <person name="Fukuzumi Y."/>
            <person name="Fujimori Y."/>
            <person name="Komiyama M."/>
            <person name="Tashiro H."/>
            <person name="Tanigami A."/>
            <person name="Fujiwara T."/>
            <person name="Ono T."/>
            <person name="Yamada K."/>
            <person name="Fujii Y."/>
            <person name="Ozaki K."/>
            <person name="Hirao M."/>
            <person name="Ohmori Y."/>
            <person name="Kawabata A."/>
            <person name="Hikiji T."/>
            <person name="Kobatake N."/>
            <person name="Inagaki H."/>
            <person name="Ikema Y."/>
            <person name="Okamoto S."/>
            <person name="Okitani R."/>
            <person name="Kawakami T."/>
            <person name="Noguchi S."/>
            <person name="Itoh T."/>
            <person name="Shigeta K."/>
            <person name="Senba T."/>
            <person name="Matsumura K."/>
            <person name="Nakajima Y."/>
            <person name="Mizuno T."/>
            <person name="Morinaga M."/>
            <person name="Sasaki M."/>
            <person name="Togashi T."/>
            <person name="Oyama M."/>
            <person name="Hata H."/>
            <person name="Watanabe M."/>
            <person name="Komatsu T."/>
            <person name="Mizushima-Sugano J."/>
            <person name="Satoh T."/>
            <person name="Shirai Y."/>
            <person name="Takahashi Y."/>
            <person name="Nakagawa K."/>
            <person name="Okumura K."/>
            <person name="Nagase T."/>
            <person name="Nomura N."/>
            <person name="Kikuchi H."/>
            <person name="Masuho Y."/>
            <person name="Yamashita R."/>
            <person name="Nakai K."/>
            <person name="Yada T."/>
            <person name="Nakamura Y."/>
            <person name="Ohara O."/>
            <person name="Isogai T."/>
            <person name="Sugano S."/>
        </authorList>
    </citation>
    <scope>NUCLEOTIDE SEQUENCE [LARGE SCALE MRNA]</scope>
    <source>
        <tissue>Cerebellum</tissue>
    </source>
</reference>
<reference key="2">
    <citation type="journal article" date="2006" name="Nature">
        <title>The DNA sequence and biological annotation of human chromosome 1.</title>
        <authorList>
            <person name="Gregory S.G."/>
            <person name="Barlow K.F."/>
            <person name="McLay K.E."/>
            <person name="Kaul R."/>
            <person name="Swarbreck D."/>
            <person name="Dunham A."/>
            <person name="Scott C.E."/>
            <person name="Howe K.L."/>
            <person name="Woodfine K."/>
            <person name="Spencer C.C.A."/>
            <person name="Jones M.C."/>
            <person name="Gillson C."/>
            <person name="Searle S."/>
            <person name="Zhou Y."/>
            <person name="Kokocinski F."/>
            <person name="McDonald L."/>
            <person name="Evans R."/>
            <person name="Phillips K."/>
            <person name="Atkinson A."/>
            <person name="Cooper R."/>
            <person name="Jones C."/>
            <person name="Hall R.E."/>
            <person name="Andrews T.D."/>
            <person name="Lloyd C."/>
            <person name="Ainscough R."/>
            <person name="Almeida J.P."/>
            <person name="Ambrose K.D."/>
            <person name="Anderson F."/>
            <person name="Andrew R.W."/>
            <person name="Ashwell R.I.S."/>
            <person name="Aubin K."/>
            <person name="Babbage A.K."/>
            <person name="Bagguley C.L."/>
            <person name="Bailey J."/>
            <person name="Beasley H."/>
            <person name="Bethel G."/>
            <person name="Bird C.P."/>
            <person name="Bray-Allen S."/>
            <person name="Brown J.Y."/>
            <person name="Brown A.J."/>
            <person name="Buckley D."/>
            <person name="Burton J."/>
            <person name="Bye J."/>
            <person name="Carder C."/>
            <person name="Chapman J.C."/>
            <person name="Clark S.Y."/>
            <person name="Clarke G."/>
            <person name="Clee C."/>
            <person name="Cobley V."/>
            <person name="Collier R.E."/>
            <person name="Corby N."/>
            <person name="Coville G.J."/>
            <person name="Davies J."/>
            <person name="Deadman R."/>
            <person name="Dunn M."/>
            <person name="Earthrowl M."/>
            <person name="Ellington A.G."/>
            <person name="Errington H."/>
            <person name="Frankish A."/>
            <person name="Frankland J."/>
            <person name="French L."/>
            <person name="Garner P."/>
            <person name="Garnett J."/>
            <person name="Gay L."/>
            <person name="Ghori M.R.J."/>
            <person name="Gibson R."/>
            <person name="Gilby L.M."/>
            <person name="Gillett W."/>
            <person name="Glithero R.J."/>
            <person name="Grafham D.V."/>
            <person name="Griffiths C."/>
            <person name="Griffiths-Jones S."/>
            <person name="Grocock R."/>
            <person name="Hammond S."/>
            <person name="Harrison E.S.I."/>
            <person name="Hart E."/>
            <person name="Haugen E."/>
            <person name="Heath P.D."/>
            <person name="Holmes S."/>
            <person name="Holt K."/>
            <person name="Howden P.J."/>
            <person name="Hunt A.R."/>
            <person name="Hunt S.E."/>
            <person name="Hunter G."/>
            <person name="Isherwood J."/>
            <person name="James R."/>
            <person name="Johnson C."/>
            <person name="Johnson D."/>
            <person name="Joy A."/>
            <person name="Kay M."/>
            <person name="Kershaw J.K."/>
            <person name="Kibukawa M."/>
            <person name="Kimberley A.M."/>
            <person name="King A."/>
            <person name="Knights A.J."/>
            <person name="Lad H."/>
            <person name="Laird G."/>
            <person name="Lawlor S."/>
            <person name="Leongamornlert D.A."/>
            <person name="Lloyd D.M."/>
            <person name="Loveland J."/>
            <person name="Lovell J."/>
            <person name="Lush M.J."/>
            <person name="Lyne R."/>
            <person name="Martin S."/>
            <person name="Mashreghi-Mohammadi M."/>
            <person name="Matthews L."/>
            <person name="Matthews N.S.W."/>
            <person name="McLaren S."/>
            <person name="Milne S."/>
            <person name="Mistry S."/>
            <person name="Moore M.J.F."/>
            <person name="Nickerson T."/>
            <person name="O'Dell C.N."/>
            <person name="Oliver K."/>
            <person name="Palmeiri A."/>
            <person name="Palmer S.A."/>
            <person name="Parker A."/>
            <person name="Patel D."/>
            <person name="Pearce A.V."/>
            <person name="Peck A.I."/>
            <person name="Pelan S."/>
            <person name="Phelps K."/>
            <person name="Phillimore B.J."/>
            <person name="Plumb R."/>
            <person name="Rajan J."/>
            <person name="Raymond C."/>
            <person name="Rouse G."/>
            <person name="Saenphimmachak C."/>
            <person name="Sehra H.K."/>
            <person name="Sheridan E."/>
            <person name="Shownkeen R."/>
            <person name="Sims S."/>
            <person name="Skuce C.D."/>
            <person name="Smith M."/>
            <person name="Steward C."/>
            <person name="Subramanian S."/>
            <person name="Sycamore N."/>
            <person name="Tracey A."/>
            <person name="Tromans A."/>
            <person name="Van Helmond Z."/>
            <person name="Wall M."/>
            <person name="Wallis J.M."/>
            <person name="White S."/>
            <person name="Whitehead S.L."/>
            <person name="Wilkinson J.E."/>
            <person name="Willey D.L."/>
            <person name="Williams H."/>
            <person name="Wilming L."/>
            <person name="Wray P.W."/>
            <person name="Wu Z."/>
            <person name="Coulson A."/>
            <person name="Vaudin M."/>
            <person name="Sulston J.E."/>
            <person name="Durbin R.M."/>
            <person name="Hubbard T."/>
            <person name="Wooster R."/>
            <person name="Dunham I."/>
            <person name="Carter N.P."/>
            <person name="McVean G."/>
            <person name="Ross M.T."/>
            <person name="Harrow J."/>
            <person name="Olson M.V."/>
            <person name="Beck S."/>
            <person name="Rogers J."/>
            <person name="Bentley D.R."/>
        </authorList>
    </citation>
    <scope>NUCLEOTIDE SEQUENCE [LARGE SCALE GENOMIC DNA]</scope>
</reference>
<reference key="3">
    <citation type="submission" date="2005-09" db="EMBL/GenBank/DDBJ databases">
        <authorList>
            <person name="Mural R.J."/>
            <person name="Istrail S."/>
            <person name="Sutton G.G."/>
            <person name="Florea L."/>
            <person name="Halpern A.L."/>
            <person name="Mobarry C.M."/>
            <person name="Lippert R."/>
            <person name="Walenz B."/>
            <person name="Shatkay H."/>
            <person name="Dew I."/>
            <person name="Miller J.R."/>
            <person name="Flanigan M.J."/>
            <person name="Edwards N.J."/>
            <person name="Bolanos R."/>
            <person name="Fasulo D."/>
            <person name="Halldorsson B.V."/>
            <person name="Hannenhalli S."/>
            <person name="Turner R."/>
            <person name="Yooseph S."/>
            <person name="Lu F."/>
            <person name="Nusskern D.R."/>
            <person name="Shue B.C."/>
            <person name="Zheng X.H."/>
            <person name="Zhong F."/>
            <person name="Delcher A.L."/>
            <person name="Huson D.H."/>
            <person name="Kravitz S.A."/>
            <person name="Mouchard L."/>
            <person name="Reinert K."/>
            <person name="Remington K.A."/>
            <person name="Clark A.G."/>
            <person name="Waterman M.S."/>
            <person name="Eichler E.E."/>
            <person name="Adams M.D."/>
            <person name="Hunkapiller M.W."/>
            <person name="Myers E.W."/>
            <person name="Venter J.C."/>
        </authorList>
    </citation>
    <scope>NUCLEOTIDE SEQUENCE [LARGE SCALE GENOMIC DNA]</scope>
</reference>
<reference key="4">
    <citation type="journal article" date="2004" name="Genome Res.">
        <title>The status, quality, and expansion of the NIH full-length cDNA project: the Mammalian Gene Collection (MGC).</title>
        <authorList>
            <consortium name="The MGC Project Team"/>
        </authorList>
    </citation>
    <scope>NUCLEOTIDE SEQUENCE [LARGE SCALE MRNA]</scope>
    <source>
        <tissue>Lung</tissue>
        <tissue>Lymph</tissue>
    </source>
</reference>
<reference key="5">
    <citation type="journal article" date="1997" name="Nucleic Acids Res.">
        <title>A novel genetic system to isolate a dominant negative effector on DNA-binding activity of Oct-2.</title>
        <authorList>
            <person name="Terunuma A."/>
            <person name="Shiba K."/>
            <person name="Noda T."/>
        </authorList>
    </citation>
    <scope>NUCLEOTIDE SEQUENCE [MRNA] OF 3-134</scope>
    <scope>FUNCTION</scope>
    <scope>TISSUE SPECIFICITY</scope>
    <source>
        <tissue>T-cell lymphoma</tissue>
    </source>
</reference>
<reference key="6">
    <citation type="journal article" date="2002" name="Mol. Biol. Cell">
        <title>Functional proteomic analysis of human nucleolus.</title>
        <authorList>
            <person name="Scherl A."/>
            <person name="Coute Y."/>
            <person name="Deon C."/>
            <person name="Calle A."/>
            <person name="Kindbeiter K."/>
            <person name="Sanchez J.-C."/>
            <person name="Greco A."/>
            <person name="Hochstrasser D.F."/>
            <person name="Diaz J.-J."/>
        </authorList>
    </citation>
    <scope>SUBCELLULAR LOCATION [LARGE SCALE ANALYSIS]</scope>
    <source>
        <tissue>Cervix carcinoma</tissue>
    </source>
</reference>
<reference key="7">
    <citation type="journal article" date="2006" name="Cell">
        <title>Global, in vivo, and site-specific phosphorylation dynamics in signaling networks.</title>
        <authorList>
            <person name="Olsen J.V."/>
            <person name="Blagoev B."/>
            <person name="Gnad F."/>
            <person name="Macek B."/>
            <person name="Kumar C."/>
            <person name="Mortensen P."/>
            <person name="Mann M."/>
        </authorList>
    </citation>
    <scope>IDENTIFICATION BY MASS SPECTROMETRY [LARGE SCALE ANALYSIS]</scope>
    <source>
        <tissue>Cervix carcinoma</tissue>
    </source>
</reference>
<reference key="8">
    <citation type="journal article" date="2008" name="Proc. Natl. Acad. Sci. U.S.A.">
        <title>A quantitative atlas of mitotic phosphorylation.</title>
        <authorList>
            <person name="Dephoure N."/>
            <person name="Zhou C."/>
            <person name="Villen J."/>
            <person name="Beausoleil S.A."/>
            <person name="Bakalarski C.E."/>
            <person name="Elledge S.J."/>
            <person name="Gygi S.P."/>
        </authorList>
    </citation>
    <scope>IDENTIFICATION BY MASS SPECTROMETRY [LARGE SCALE ANALYSIS]</scope>
    <source>
        <tissue>Cervix carcinoma</tissue>
    </source>
</reference>
<reference key="9">
    <citation type="journal article" date="2009" name="Sci. Signal.">
        <title>Quantitative phosphoproteomic analysis of T cell receptor signaling reveals system-wide modulation of protein-protein interactions.</title>
        <authorList>
            <person name="Mayya V."/>
            <person name="Lundgren D.H."/>
            <person name="Hwang S.-I."/>
            <person name="Rezaul K."/>
            <person name="Wu L."/>
            <person name="Eng J.K."/>
            <person name="Rodionov V."/>
            <person name="Han D.K."/>
        </authorList>
    </citation>
    <scope>IDENTIFICATION BY MASS SPECTROMETRY [LARGE SCALE ANALYSIS]</scope>
    <source>
        <tissue>Leukemic T-cell</tissue>
    </source>
</reference>
<reference key="10">
    <citation type="journal article" date="2010" name="Sci. Signal.">
        <title>Quantitative phosphoproteomics reveals widespread full phosphorylation site occupancy during mitosis.</title>
        <authorList>
            <person name="Olsen J.V."/>
            <person name="Vermeulen M."/>
            <person name="Santamaria A."/>
            <person name="Kumar C."/>
            <person name="Miller M.L."/>
            <person name="Jensen L.J."/>
            <person name="Gnad F."/>
            <person name="Cox J."/>
            <person name="Jensen T.S."/>
            <person name="Nigg E.A."/>
            <person name="Brunak S."/>
            <person name="Mann M."/>
        </authorList>
    </citation>
    <scope>IDENTIFICATION BY MASS SPECTROMETRY [LARGE SCALE ANALYSIS]</scope>
    <source>
        <tissue>Cervix carcinoma</tissue>
    </source>
</reference>
<reference key="11">
    <citation type="journal article" date="2011" name="Sci. Signal.">
        <title>System-wide temporal characterization of the proteome and phosphoproteome of human embryonic stem cell differentiation.</title>
        <authorList>
            <person name="Rigbolt K.T."/>
            <person name="Prokhorova T.A."/>
            <person name="Akimov V."/>
            <person name="Henningsen J."/>
            <person name="Johansen P.T."/>
            <person name="Kratchmarova I."/>
            <person name="Kassem M."/>
            <person name="Mann M."/>
            <person name="Olsen J.V."/>
            <person name="Blagoev B."/>
        </authorList>
    </citation>
    <scope>IDENTIFICATION BY MASS SPECTROMETRY [LARGE SCALE ANALYSIS]</scope>
</reference>
<reference key="12">
    <citation type="journal article" date="2013" name="J. Proteome Res.">
        <title>Toward a comprehensive characterization of a human cancer cell phosphoproteome.</title>
        <authorList>
            <person name="Zhou H."/>
            <person name="Di Palma S."/>
            <person name="Preisinger C."/>
            <person name="Peng M."/>
            <person name="Polat A.N."/>
            <person name="Heck A.J."/>
            <person name="Mohammed S."/>
        </authorList>
    </citation>
    <scope>IDENTIFICATION BY MASS SPECTROMETRY [LARGE SCALE ANALYSIS]</scope>
    <source>
        <tissue>Cervix carcinoma</tissue>
    </source>
</reference>
<reference key="13">
    <citation type="journal article" date="2008" name="Protein Sci.">
        <title>The solution structure of ZNF593 from Homo sapiens reveals a zinc finger in a predominantly unstructured protein.</title>
        <authorList>
            <person name="Hayes P.L."/>
            <person name="Lytle B.L."/>
            <person name="Volkman B.F."/>
            <person name="Peterson F.C."/>
        </authorList>
    </citation>
    <scope>STRUCTURE BY NMR OF 20-134 IN COMPLEX WITH ZINC IONS</scope>
    <scope>DOMAIN</scope>
</reference>
<reference evidence="10 11" key="14">
    <citation type="journal article" date="2020" name="Nat. Commun.">
        <title>Structural snapshots of human pre-60S ribosomal particles before and after nuclear export.</title>
        <authorList>
            <person name="Liang X."/>
            <person name="Zuo M.Q."/>
            <person name="Zhang Y."/>
            <person name="Li N."/>
            <person name="Ma C."/>
            <person name="Dong M.Q."/>
            <person name="Gao N."/>
        </authorList>
    </citation>
    <scope>STRUCTURE BY ELECTRON MICROSCOPY (3.13 ANGSTROMS) IN COMPLEX WITH PRE-60S RIBOSOMAL PARTICLES</scope>
    <scope>FUNCTION</scope>
    <scope>INTERACTION WITH PRE-60S RIBOSOMAL PARTICLES</scope>
</reference>
<sequence>MGRSRRTGAHRAHSLARQMKAKRRRPDLDEIHRELRPQGSARPQPDPNAEFDPDLPGGGLHRCLACARYFIDSTNLKTHFRSKDHKKRLKQLSVEPYSQEEAERAAGMGSYVPPRRLAVPTEVSTEVPEMDTST</sequence>